<feature type="chain" id="PRO_0000146022" description="Phosphoglycerate kinase">
    <location>
        <begin position="1"/>
        <end position="400"/>
    </location>
</feature>
<feature type="binding site" evidence="1">
    <location>
        <begin position="24"/>
        <end position="26"/>
    </location>
    <ligand>
        <name>substrate</name>
    </ligand>
</feature>
<feature type="binding site" evidence="1">
    <location>
        <position position="40"/>
    </location>
    <ligand>
        <name>substrate</name>
    </ligand>
</feature>
<feature type="binding site" evidence="1">
    <location>
        <begin position="63"/>
        <end position="66"/>
    </location>
    <ligand>
        <name>substrate</name>
    </ligand>
</feature>
<feature type="binding site" evidence="1">
    <location>
        <position position="121"/>
    </location>
    <ligand>
        <name>substrate</name>
    </ligand>
</feature>
<feature type="binding site" evidence="1">
    <location>
        <position position="154"/>
    </location>
    <ligand>
        <name>substrate</name>
    </ligand>
</feature>
<feature type="binding site" evidence="1">
    <location>
        <position position="205"/>
    </location>
    <ligand>
        <name>ATP</name>
        <dbReference type="ChEBI" id="CHEBI:30616"/>
    </ligand>
</feature>
<feature type="binding site" evidence="1">
    <location>
        <position position="296"/>
    </location>
    <ligand>
        <name>ATP</name>
        <dbReference type="ChEBI" id="CHEBI:30616"/>
    </ligand>
</feature>
<feature type="binding site" evidence="1">
    <location>
        <position position="327"/>
    </location>
    <ligand>
        <name>ATP</name>
        <dbReference type="ChEBI" id="CHEBI:30616"/>
    </ligand>
</feature>
<feature type="binding site" evidence="1">
    <location>
        <begin position="356"/>
        <end position="359"/>
    </location>
    <ligand>
        <name>ATP</name>
        <dbReference type="ChEBI" id="CHEBI:30616"/>
    </ligand>
</feature>
<proteinExistence type="inferred from homology"/>
<name>PGK_THEVB</name>
<comment type="catalytic activity">
    <reaction evidence="1">
        <text>(2R)-3-phosphoglycerate + ATP = (2R)-3-phospho-glyceroyl phosphate + ADP</text>
        <dbReference type="Rhea" id="RHEA:14801"/>
        <dbReference type="ChEBI" id="CHEBI:30616"/>
        <dbReference type="ChEBI" id="CHEBI:57604"/>
        <dbReference type="ChEBI" id="CHEBI:58272"/>
        <dbReference type="ChEBI" id="CHEBI:456216"/>
        <dbReference type="EC" id="2.7.2.3"/>
    </reaction>
</comment>
<comment type="pathway">
    <text evidence="1">Carbohydrate degradation; glycolysis; pyruvate from D-glyceraldehyde 3-phosphate: step 2/5.</text>
</comment>
<comment type="subunit">
    <text evidence="1">Monomer.</text>
</comment>
<comment type="subcellular location">
    <subcellularLocation>
        <location evidence="1">Cytoplasm</location>
    </subcellularLocation>
</comment>
<comment type="similarity">
    <text evidence="1">Belongs to the phosphoglycerate kinase family.</text>
</comment>
<dbReference type="EC" id="2.7.2.3" evidence="1"/>
<dbReference type="EMBL" id="BA000039">
    <property type="protein sequence ID" value="BAC09820.1"/>
    <property type="molecule type" value="Genomic_DNA"/>
</dbReference>
<dbReference type="RefSeq" id="NP_683058.1">
    <property type="nucleotide sequence ID" value="NC_004113.1"/>
</dbReference>
<dbReference type="RefSeq" id="WP_011058101.1">
    <property type="nucleotide sequence ID" value="NC_004113.1"/>
</dbReference>
<dbReference type="SMR" id="Q8DGP7"/>
<dbReference type="STRING" id="197221.gene:10748885"/>
<dbReference type="EnsemblBacteria" id="BAC09820">
    <property type="protein sequence ID" value="BAC09820"/>
    <property type="gene ID" value="BAC09820"/>
</dbReference>
<dbReference type="KEGG" id="tel:tll2268"/>
<dbReference type="PATRIC" id="fig|197221.4.peg.2377"/>
<dbReference type="eggNOG" id="COG0126">
    <property type="taxonomic scope" value="Bacteria"/>
</dbReference>
<dbReference type="UniPathway" id="UPA00109">
    <property type="reaction ID" value="UER00185"/>
</dbReference>
<dbReference type="Proteomes" id="UP000000440">
    <property type="component" value="Chromosome"/>
</dbReference>
<dbReference type="GO" id="GO:0005829">
    <property type="term" value="C:cytosol"/>
    <property type="evidence" value="ECO:0007669"/>
    <property type="project" value="TreeGrafter"/>
</dbReference>
<dbReference type="GO" id="GO:0043531">
    <property type="term" value="F:ADP binding"/>
    <property type="evidence" value="ECO:0007669"/>
    <property type="project" value="TreeGrafter"/>
</dbReference>
<dbReference type="GO" id="GO:0005524">
    <property type="term" value="F:ATP binding"/>
    <property type="evidence" value="ECO:0007669"/>
    <property type="project" value="UniProtKB-KW"/>
</dbReference>
<dbReference type="GO" id="GO:0004618">
    <property type="term" value="F:phosphoglycerate kinase activity"/>
    <property type="evidence" value="ECO:0007669"/>
    <property type="project" value="UniProtKB-UniRule"/>
</dbReference>
<dbReference type="GO" id="GO:0006094">
    <property type="term" value="P:gluconeogenesis"/>
    <property type="evidence" value="ECO:0007669"/>
    <property type="project" value="TreeGrafter"/>
</dbReference>
<dbReference type="GO" id="GO:0006096">
    <property type="term" value="P:glycolytic process"/>
    <property type="evidence" value="ECO:0007669"/>
    <property type="project" value="UniProtKB-UniRule"/>
</dbReference>
<dbReference type="CDD" id="cd00318">
    <property type="entry name" value="Phosphoglycerate_kinase"/>
    <property type="match status" value="1"/>
</dbReference>
<dbReference type="FunFam" id="3.40.50.1260:FF:000003">
    <property type="entry name" value="Phosphoglycerate kinase"/>
    <property type="match status" value="1"/>
</dbReference>
<dbReference type="FunFam" id="3.40.50.1260:FF:000006">
    <property type="entry name" value="Phosphoglycerate kinase"/>
    <property type="match status" value="1"/>
</dbReference>
<dbReference type="Gene3D" id="3.40.50.1260">
    <property type="entry name" value="Phosphoglycerate kinase, N-terminal domain"/>
    <property type="match status" value="2"/>
</dbReference>
<dbReference type="HAMAP" id="MF_00145">
    <property type="entry name" value="Phosphoglyc_kinase"/>
    <property type="match status" value="1"/>
</dbReference>
<dbReference type="InterPro" id="IPR001576">
    <property type="entry name" value="Phosphoglycerate_kinase"/>
</dbReference>
<dbReference type="InterPro" id="IPR015911">
    <property type="entry name" value="Phosphoglycerate_kinase_CS"/>
</dbReference>
<dbReference type="InterPro" id="IPR015824">
    <property type="entry name" value="Phosphoglycerate_kinase_N"/>
</dbReference>
<dbReference type="InterPro" id="IPR036043">
    <property type="entry name" value="Phosphoglycerate_kinase_sf"/>
</dbReference>
<dbReference type="PANTHER" id="PTHR11406">
    <property type="entry name" value="PHOSPHOGLYCERATE KINASE"/>
    <property type="match status" value="1"/>
</dbReference>
<dbReference type="PANTHER" id="PTHR11406:SF23">
    <property type="entry name" value="PHOSPHOGLYCERATE KINASE 1, CHLOROPLASTIC-RELATED"/>
    <property type="match status" value="1"/>
</dbReference>
<dbReference type="Pfam" id="PF00162">
    <property type="entry name" value="PGK"/>
    <property type="match status" value="1"/>
</dbReference>
<dbReference type="PIRSF" id="PIRSF000724">
    <property type="entry name" value="Pgk"/>
    <property type="match status" value="1"/>
</dbReference>
<dbReference type="PRINTS" id="PR00477">
    <property type="entry name" value="PHGLYCKINASE"/>
</dbReference>
<dbReference type="SUPFAM" id="SSF53748">
    <property type="entry name" value="Phosphoglycerate kinase"/>
    <property type="match status" value="1"/>
</dbReference>
<dbReference type="PROSITE" id="PS00111">
    <property type="entry name" value="PGLYCERATE_KINASE"/>
    <property type="match status" value="1"/>
</dbReference>
<keyword id="KW-0067">ATP-binding</keyword>
<keyword id="KW-0963">Cytoplasm</keyword>
<keyword id="KW-0324">Glycolysis</keyword>
<keyword id="KW-0418">Kinase</keyword>
<keyword id="KW-0547">Nucleotide-binding</keyword>
<keyword id="KW-1185">Reference proteome</keyword>
<keyword id="KW-0808">Transferase</keyword>
<gene>
    <name evidence="1" type="primary">pgk</name>
    <name type="ordered locus">tll2268</name>
</gene>
<organism>
    <name type="scientific">Thermosynechococcus vestitus (strain NIES-2133 / IAM M-273 / BP-1)</name>
    <dbReference type="NCBI Taxonomy" id="197221"/>
    <lineage>
        <taxon>Bacteria</taxon>
        <taxon>Bacillati</taxon>
        <taxon>Cyanobacteriota</taxon>
        <taxon>Cyanophyceae</taxon>
        <taxon>Acaryochloridales</taxon>
        <taxon>Thermosynechococcaceae</taxon>
        <taxon>Thermosynechococcus</taxon>
    </lineage>
</organism>
<sequence>MSKKSVAQLSAADLEGKRVLVRVDFNVPVDEKGVITDETRIRAALPTIQDLISKGAKVILVSHFGRPKGVDEKLRLTPVAQRLSELLHKPVAKLDDCIGDAVIAHTQAMANGDVCLLENVRFHPGEEKNDPEFAKQLAACAEVYVNDAFGTAHRAHASTAGVTQYLSPCVAGFLMEKELEYLQNAIEHPRRPLAAIVGGSKVSSKIGVIEALLEKVDKLLIGGGMIFTFYKARGLNVGKSLVEEDKLELAKHLETKAQEKGVELLLPTDVVVADNFANDANSQVVSIEAIPDDWMGLDIGPASVKRFQEALQDCKTVIWNGPMGVFEFDQFAKGTEAIARYLAELTSQGVCTIIGGGDSVAAVEKVGVADRMSHISTGGGASLELLEGKQLPGIAALDDA</sequence>
<accession>Q8DGP7</accession>
<reference key="1">
    <citation type="journal article" date="2002" name="DNA Res.">
        <title>Complete genome structure of the thermophilic cyanobacterium Thermosynechococcus elongatus BP-1.</title>
        <authorList>
            <person name="Nakamura Y."/>
            <person name="Kaneko T."/>
            <person name="Sato S."/>
            <person name="Ikeuchi M."/>
            <person name="Katoh H."/>
            <person name="Sasamoto S."/>
            <person name="Watanabe A."/>
            <person name="Iriguchi M."/>
            <person name="Kawashima K."/>
            <person name="Kimura T."/>
            <person name="Kishida Y."/>
            <person name="Kiyokawa C."/>
            <person name="Kohara M."/>
            <person name="Matsumoto M."/>
            <person name="Matsuno A."/>
            <person name="Nakazaki N."/>
            <person name="Shimpo S."/>
            <person name="Sugimoto M."/>
            <person name="Takeuchi C."/>
            <person name="Yamada M."/>
            <person name="Tabata S."/>
        </authorList>
    </citation>
    <scope>NUCLEOTIDE SEQUENCE [LARGE SCALE GENOMIC DNA]</scope>
    <source>
        <strain>NIES-2133 / IAM M-273 / BP-1</strain>
    </source>
</reference>
<evidence type="ECO:0000255" key="1">
    <source>
        <dbReference type="HAMAP-Rule" id="MF_00145"/>
    </source>
</evidence>
<protein>
    <recommendedName>
        <fullName evidence="1">Phosphoglycerate kinase</fullName>
        <ecNumber evidence="1">2.7.2.3</ecNumber>
    </recommendedName>
</protein>